<feature type="chain" id="PRO_0000418951" description="(R)-limonene synthase">
    <location>
        <begin position="1"/>
        <end position="602"/>
    </location>
</feature>
<feature type="short sequence motif" description="DDXXD motif">
    <location>
        <begin position="356"/>
        <end position="360"/>
    </location>
</feature>
<feature type="binding site" evidence="1">
    <location>
        <position position="356"/>
    </location>
    <ligand>
        <name>Mg(2+)</name>
        <dbReference type="ChEBI" id="CHEBI:18420"/>
        <label>1</label>
    </ligand>
</feature>
<feature type="binding site" evidence="1">
    <location>
        <position position="356"/>
    </location>
    <ligand>
        <name>Mg(2+)</name>
        <dbReference type="ChEBI" id="CHEBI:18420"/>
        <label>2</label>
    </ligand>
</feature>
<feature type="binding site" evidence="1">
    <location>
        <position position="360"/>
    </location>
    <ligand>
        <name>Mg(2+)</name>
        <dbReference type="ChEBI" id="CHEBI:18420"/>
        <label>1</label>
    </ligand>
</feature>
<feature type="binding site" evidence="1">
    <location>
        <position position="360"/>
    </location>
    <ligand>
        <name>Mg(2+)</name>
        <dbReference type="ChEBI" id="CHEBI:18420"/>
        <label>2</label>
    </ligand>
</feature>
<feature type="binding site" evidence="1">
    <location>
        <position position="500"/>
    </location>
    <ligand>
        <name>Mg(2+)</name>
        <dbReference type="ChEBI" id="CHEBI:18420"/>
        <label>3</label>
    </ligand>
</feature>
<feature type="binding site" evidence="1">
    <location>
        <position position="504"/>
    </location>
    <ligand>
        <name>Mg(2+)</name>
        <dbReference type="ChEBI" id="CHEBI:18420"/>
        <label>3</label>
    </ligand>
</feature>
<feature type="binding site" evidence="1">
    <location>
        <position position="508"/>
    </location>
    <ligand>
        <name>Mg(2+)</name>
        <dbReference type="ChEBI" id="CHEBI:18420"/>
        <label>3</label>
    </ligand>
</feature>
<accession>Q2XSC6</accession>
<dbReference type="EC" id="4.2.3.20"/>
<dbReference type="EMBL" id="DQ263740">
    <property type="protein sequence ID" value="ABB73044.1"/>
    <property type="molecule type" value="mRNA"/>
</dbReference>
<dbReference type="SMR" id="Q2XSC6"/>
<dbReference type="BRENDA" id="4.2.3.113">
    <property type="organism ID" value="9723"/>
</dbReference>
<dbReference type="BRENDA" id="4.2.3.116">
    <property type="organism ID" value="9723"/>
</dbReference>
<dbReference type="BRENDA" id="4.2.3.121">
    <property type="organism ID" value="9723"/>
</dbReference>
<dbReference type="BRENDA" id="4.2.3.20">
    <property type="organism ID" value="9723"/>
</dbReference>
<dbReference type="GO" id="GO:0034002">
    <property type="term" value="F:(R)-limonene synthase activity"/>
    <property type="evidence" value="ECO:0007669"/>
    <property type="project" value="UniProtKB-EC"/>
</dbReference>
<dbReference type="GO" id="GO:0000287">
    <property type="term" value="F:magnesium ion binding"/>
    <property type="evidence" value="ECO:0007669"/>
    <property type="project" value="InterPro"/>
</dbReference>
<dbReference type="GO" id="GO:0050550">
    <property type="term" value="F:pinene synthase activity"/>
    <property type="evidence" value="ECO:0007669"/>
    <property type="project" value="UniProtKB-ARBA"/>
</dbReference>
<dbReference type="GO" id="GO:0046248">
    <property type="term" value="P:alpha-pinene biosynthetic process"/>
    <property type="evidence" value="ECO:0007669"/>
    <property type="project" value="UniProtKB-ARBA"/>
</dbReference>
<dbReference type="GO" id="GO:0016102">
    <property type="term" value="P:diterpenoid biosynthetic process"/>
    <property type="evidence" value="ECO:0007669"/>
    <property type="project" value="InterPro"/>
</dbReference>
<dbReference type="GO" id="GO:0010597">
    <property type="term" value="P:green leaf volatile biosynthetic process"/>
    <property type="evidence" value="ECO:0007669"/>
    <property type="project" value="UniProtKB-ARBA"/>
</dbReference>
<dbReference type="GO" id="GO:0016099">
    <property type="term" value="P:monoterpenoid biosynthetic process"/>
    <property type="evidence" value="ECO:0007669"/>
    <property type="project" value="UniProtKB-ARBA"/>
</dbReference>
<dbReference type="CDD" id="cd00684">
    <property type="entry name" value="Terpene_cyclase_plant_C1"/>
    <property type="match status" value="1"/>
</dbReference>
<dbReference type="FunFam" id="1.10.600.10:FF:000007">
    <property type="entry name" value="Isoprene synthase, chloroplastic"/>
    <property type="match status" value="1"/>
</dbReference>
<dbReference type="FunFam" id="1.50.10.130:FF:000001">
    <property type="entry name" value="Isoprene synthase, chloroplastic"/>
    <property type="match status" value="1"/>
</dbReference>
<dbReference type="Gene3D" id="1.10.600.10">
    <property type="entry name" value="Farnesyl Diphosphate Synthase"/>
    <property type="match status" value="1"/>
</dbReference>
<dbReference type="Gene3D" id="1.50.10.130">
    <property type="entry name" value="Terpene synthase, N-terminal domain"/>
    <property type="match status" value="1"/>
</dbReference>
<dbReference type="InterPro" id="IPR008949">
    <property type="entry name" value="Isoprenoid_synthase_dom_sf"/>
</dbReference>
<dbReference type="InterPro" id="IPR034741">
    <property type="entry name" value="Terpene_cyclase-like_1_C"/>
</dbReference>
<dbReference type="InterPro" id="IPR044814">
    <property type="entry name" value="Terpene_cyclase_plant_C1"/>
</dbReference>
<dbReference type="InterPro" id="IPR001906">
    <property type="entry name" value="Terpene_synth_N"/>
</dbReference>
<dbReference type="InterPro" id="IPR036965">
    <property type="entry name" value="Terpene_synth_N_sf"/>
</dbReference>
<dbReference type="InterPro" id="IPR050148">
    <property type="entry name" value="Terpene_synthase-like"/>
</dbReference>
<dbReference type="InterPro" id="IPR005630">
    <property type="entry name" value="Terpene_synthase_metal-bd"/>
</dbReference>
<dbReference type="InterPro" id="IPR008930">
    <property type="entry name" value="Terpenoid_cyclase/PrenylTrfase"/>
</dbReference>
<dbReference type="PANTHER" id="PTHR31225">
    <property type="entry name" value="OS04G0344100 PROTEIN-RELATED"/>
    <property type="match status" value="1"/>
</dbReference>
<dbReference type="PANTHER" id="PTHR31225:SF9">
    <property type="entry name" value="TERPENE SYNTHASE 10"/>
    <property type="match status" value="1"/>
</dbReference>
<dbReference type="Pfam" id="PF01397">
    <property type="entry name" value="Terpene_synth"/>
    <property type="match status" value="1"/>
</dbReference>
<dbReference type="Pfam" id="PF03936">
    <property type="entry name" value="Terpene_synth_C"/>
    <property type="match status" value="1"/>
</dbReference>
<dbReference type="SFLD" id="SFLDG01019">
    <property type="entry name" value="Terpene_Cyclase_Like_1_C_Termi"/>
    <property type="match status" value="1"/>
</dbReference>
<dbReference type="SFLD" id="SFLDG01604">
    <property type="entry name" value="Terpene_Cyclase_Like_1_C_Termi"/>
    <property type="match status" value="1"/>
</dbReference>
<dbReference type="SFLD" id="SFLDG01014">
    <property type="entry name" value="Terpene_Cyclase_Like_1_N-term"/>
    <property type="match status" value="1"/>
</dbReference>
<dbReference type="SUPFAM" id="SSF48239">
    <property type="entry name" value="Terpenoid cyclases/Protein prenyltransferases"/>
    <property type="match status" value="1"/>
</dbReference>
<dbReference type="SUPFAM" id="SSF48576">
    <property type="entry name" value="Terpenoid synthases"/>
    <property type="match status" value="1"/>
</dbReference>
<organism>
    <name type="scientific">Lavandula angustifolia</name>
    <name type="common">Lavender</name>
    <dbReference type="NCBI Taxonomy" id="39329"/>
    <lineage>
        <taxon>Eukaryota</taxon>
        <taxon>Viridiplantae</taxon>
        <taxon>Streptophyta</taxon>
        <taxon>Embryophyta</taxon>
        <taxon>Tracheophyta</taxon>
        <taxon>Spermatophyta</taxon>
        <taxon>Magnoliopsida</taxon>
        <taxon>eudicotyledons</taxon>
        <taxon>Gunneridae</taxon>
        <taxon>Pentapetalae</taxon>
        <taxon>asterids</taxon>
        <taxon>lamiids</taxon>
        <taxon>Lamiales</taxon>
        <taxon>Lamiaceae</taxon>
        <taxon>Nepetoideae</taxon>
        <taxon>Ocimeae</taxon>
        <taxon>Lavandulinae</taxon>
        <taxon>Lavandula</taxon>
    </lineage>
</organism>
<keyword id="KW-0456">Lyase</keyword>
<keyword id="KW-0460">Magnesium</keyword>
<keyword id="KW-0464">Manganese</keyword>
<keyword id="KW-0479">Metal-binding</keyword>
<evidence type="ECO:0000250" key="1"/>
<evidence type="ECO:0000269" key="2">
    <source>
    </source>
</evidence>
<evidence type="ECO:0000305" key="3"/>
<name>LALIM_LAVAN</name>
<sequence length="602" mass="70345">MSIISMHVGILNRPAAYNHLRNLDRRASKPRHVSSTAAATRLRVSCATQLEIKSVDETRRSGNYNPTAWDFNYIQSLDNQYKKERYSTRHAELTVQVKKLLEEEMEAVQKLELIEDLKNLGISYPFKDNIQQILNQIYNEHKCCHNSEVEEKDLYFTALRFRLLRQQGFEVSQEVFDHFKNEKGTDFKPNLADDTKGLLQLYEASFLLREAEDTLELARQFSTKLLQKKVDENGDDKIEDNLLLWIRRSLELPLHWRVQRLEARGFLDAYVRRPDMNPIVFELAKLDFNITQATQQEELKDLSRWWNSTGLAEKLPFARDRVVESYFWAMGTFEPHQYGYQRELVAKIIALATVVDDVYDVYGTLEELELFTDAIRRWDRESIDQLPYYMQLCFLTVNNFVFELAHDVLKDKSFNCLPHLQRSWLDLAEAYLVEAKWYHSRYTPSLEEYLNIARVSVTCPTIVSQMYFALPIPIEKPVIEIMYKYHDILYLSGMLLRLPDDLGTASFELKRGDVQKAVQCYMKERNVPENEAREHVKFLIREASKQINTAMATDCPFTEDFAVAAANLGRVANFVYVDGDGFGVQHSKIYEQIGTLMFEPYP</sequence>
<comment type="function">
    <text evidence="2">Catalyzes the formation of (R)-(+)-limonene, terpinolene, (1R,5S)-(+)-camphene, (1R,5R)-(+)-alpha-pinene, beta-myrcene and traces of alpha-phellandrene.</text>
</comment>
<comment type="catalytic activity">
    <reaction evidence="2">
        <text>(2E)-geranyl diphosphate = (4R)-limonene + diphosphate</text>
        <dbReference type="Rhea" id="RHEA:10940"/>
        <dbReference type="ChEBI" id="CHEBI:15382"/>
        <dbReference type="ChEBI" id="CHEBI:33019"/>
        <dbReference type="ChEBI" id="CHEBI:58057"/>
        <dbReference type="EC" id="4.2.3.20"/>
    </reaction>
</comment>
<comment type="cofactor">
    <cofactor evidence="1">
        <name>Mg(2+)</name>
        <dbReference type="ChEBI" id="CHEBI:18420"/>
    </cofactor>
    <cofactor evidence="1">
        <name>Mn(2+)</name>
        <dbReference type="ChEBI" id="CHEBI:29035"/>
    </cofactor>
    <text evidence="1">Binds 3 Mg(2+) or Mn(2+) ions per subunit.</text>
</comment>
<comment type="biophysicochemical properties">
    <kinetics>
        <KM evidence="2">47.4 uM for geranyl diphosphate</KM>
        <text>kcat is 0.012 sec(-1) with geranyl diphosphate as substrate.</text>
    </kinetics>
    <phDependence>
        <text evidence="2">Optimum pH is 7.0.</text>
    </phDependence>
</comment>
<comment type="similarity">
    <text evidence="3">Belongs to the terpene synthase family.</text>
</comment>
<protein>
    <recommendedName>
        <fullName>(R)-limonene synthase</fullName>
        <shortName>LaLIMS</shortName>
        <ecNumber>4.2.3.20</ecNumber>
    </recommendedName>
</protein>
<reference key="1">
    <citation type="journal article" date="2007" name="Arch. Biochem. Biophys.">
        <title>Cloning and functional characterization of three terpene synthases from lavender (Lavandula angustifolia).</title>
        <authorList>
            <person name="Landmann C."/>
            <person name="Fink B."/>
            <person name="Festner M."/>
            <person name="Dregus M."/>
            <person name="Engel K.H."/>
            <person name="Schwab W."/>
        </authorList>
    </citation>
    <scope>NUCLEOTIDE SEQUENCE [MRNA]</scope>
    <scope>FUNCTION</scope>
    <scope>CATALYTIC ACTIVITY</scope>
    <scope>BIOPHYSICOCHEMICAL PROPERTIES</scope>
</reference>
<proteinExistence type="evidence at protein level"/>